<reference key="1">
    <citation type="journal article" date="1990" name="Cell">
        <title>The Drosophila 74EF early puff contains E74, a complex ecdysone-inducible gene that encodes two ets-related proteins.</title>
        <authorList>
            <person name="Burtis K.C."/>
            <person name="Thummel C.S."/>
            <person name="Jones C.W."/>
            <person name="Karim F.D."/>
            <person name="Hogness D.S."/>
        </authorList>
    </citation>
    <scope>NUCLEOTIDE SEQUENCE [MRNA] (ISOFORM A)</scope>
    <scope>ALTERNATIVE SPLICING</scope>
    <source>
        <strain>Canton-S</strain>
    </source>
</reference>
<reference key="2">
    <citation type="journal article" date="2000" name="Science">
        <title>The genome sequence of Drosophila melanogaster.</title>
        <authorList>
            <person name="Adams M.D."/>
            <person name="Celniker S.E."/>
            <person name="Holt R.A."/>
            <person name="Evans C.A."/>
            <person name="Gocayne J.D."/>
            <person name="Amanatides P.G."/>
            <person name="Scherer S.E."/>
            <person name="Li P.W."/>
            <person name="Hoskins R.A."/>
            <person name="Galle R.F."/>
            <person name="George R.A."/>
            <person name="Lewis S.E."/>
            <person name="Richards S."/>
            <person name="Ashburner M."/>
            <person name="Henderson S.N."/>
            <person name="Sutton G.G."/>
            <person name="Wortman J.R."/>
            <person name="Yandell M.D."/>
            <person name="Zhang Q."/>
            <person name="Chen L.X."/>
            <person name="Brandon R.C."/>
            <person name="Rogers Y.-H.C."/>
            <person name="Blazej R.G."/>
            <person name="Champe M."/>
            <person name="Pfeiffer B.D."/>
            <person name="Wan K.H."/>
            <person name="Doyle C."/>
            <person name="Baxter E.G."/>
            <person name="Helt G."/>
            <person name="Nelson C.R."/>
            <person name="Miklos G.L.G."/>
            <person name="Abril J.F."/>
            <person name="Agbayani A."/>
            <person name="An H.-J."/>
            <person name="Andrews-Pfannkoch C."/>
            <person name="Baldwin D."/>
            <person name="Ballew R.M."/>
            <person name="Basu A."/>
            <person name="Baxendale J."/>
            <person name="Bayraktaroglu L."/>
            <person name="Beasley E.M."/>
            <person name="Beeson K.Y."/>
            <person name="Benos P.V."/>
            <person name="Berman B.P."/>
            <person name="Bhandari D."/>
            <person name="Bolshakov S."/>
            <person name="Borkova D."/>
            <person name="Botchan M.R."/>
            <person name="Bouck J."/>
            <person name="Brokstein P."/>
            <person name="Brottier P."/>
            <person name="Burtis K.C."/>
            <person name="Busam D.A."/>
            <person name="Butler H."/>
            <person name="Cadieu E."/>
            <person name="Center A."/>
            <person name="Chandra I."/>
            <person name="Cherry J.M."/>
            <person name="Cawley S."/>
            <person name="Dahlke C."/>
            <person name="Davenport L.B."/>
            <person name="Davies P."/>
            <person name="de Pablos B."/>
            <person name="Delcher A."/>
            <person name="Deng Z."/>
            <person name="Mays A.D."/>
            <person name="Dew I."/>
            <person name="Dietz S.M."/>
            <person name="Dodson K."/>
            <person name="Doup L.E."/>
            <person name="Downes M."/>
            <person name="Dugan-Rocha S."/>
            <person name="Dunkov B.C."/>
            <person name="Dunn P."/>
            <person name="Durbin K.J."/>
            <person name="Evangelista C.C."/>
            <person name="Ferraz C."/>
            <person name="Ferriera S."/>
            <person name="Fleischmann W."/>
            <person name="Fosler C."/>
            <person name="Gabrielian A.E."/>
            <person name="Garg N.S."/>
            <person name="Gelbart W.M."/>
            <person name="Glasser K."/>
            <person name="Glodek A."/>
            <person name="Gong F."/>
            <person name="Gorrell J.H."/>
            <person name="Gu Z."/>
            <person name="Guan P."/>
            <person name="Harris M."/>
            <person name="Harris N.L."/>
            <person name="Harvey D.A."/>
            <person name="Heiman T.J."/>
            <person name="Hernandez J.R."/>
            <person name="Houck J."/>
            <person name="Hostin D."/>
            <person name="Houston K.A."/>
            <person name="Howland T.J."/>
            <person name="Wei M.-H."/>
            <person name="Ibegwam C."/>
            <person name="Jalali M."/>
            <person name="Kalush F."/>
            <person name="Karpen G.H."/>
            <person name="Ke Z."/>
            <person name="Kennison J.A."/>
            <person name="Ketchum K.A."/>
            <person name="Kimmel B.E."/>
            <person name="Kodira C.D."/>
            <person name="Kraft C.L."/>
            <person name="Kravitz S."/>
            <person name="Kulp D."/>
            <person name="Lai Z."/>
            <person name="Lasko P."/>
            <person name="Lei Y."/>
            <person name="Levitsky A.A."/>
            <person name="Li J.H."/>
            <person name="Li Z."/>
            <person name="Liang Y."/>
            <person name="Lin X."/>
            <person name="Liu X."/>
            <person name="Mattei B."/>
            <person name="McIntosh T.C."/>
            <person name="McLeod M.P."/>
            <person name="McPherson D."/>
            <person name="Merkulov G."/>
            <person name="Milshina N.V."/>
            <person name="Mobarry C."/>
            <person name="Morris J."/>
            <person name="Moshrefi A."/>
            <person name="Mount S.M."/>
            <person name="Moy M."/>
            <person name="Murphy B."/>
            <person name="Murphy L."/>
            <person name="Muzny D.M."/>
            <person name="Nelson D.L."/>
            <person name="Nelson D.R."/>
            <person name="Nelson K.A."/>
            <person name="Nixon K."/>
            <person name="Nusskern D.R."/>
            <person name="Pacleb J.M."/>
            <person name="Palazzolo M."/>
            <person name="Pittman G.S."/>
            <person name="Pan S."/>
            <person name="Pollard J."/>
            <person name="Puri V."/>
            <person name="Reese M.G."/>
            <person name="Reinert K."/>
            <person name="Remington K."/>
            <person name="Saunders R.D.C."/>
            <person name="Scheeler F."/>
            <person name="Shen H."/>
            <person name="Shue B.C."/>
            <person name="Siden-Kiamos I."/>
            <person name="Simpson M."/>
            <person name="Skupski M.P."/>
            <person name="Smith T.J."/>
            <person name="Spier E."/>
            <person name="Spradling A.C."/>
            <person name="Stapleton M."/>
            <person name="Strong R."/>
            <person name="Sun E."/>
            <person name="Svirskas R."/>
            <person name="Tector C."/>
            <person name="Turner R."/>
            <person name="Venter E."/>
            <person name="Wang A.H."/>
            <person name="Wang X."/>
            <person name="Wang Z.-Y."/>
            <person name="Wassarman D.A."/>
            <person name="Weinstock G.M."/>
            <person name="Weissenbach J."/>
            <person name="Williams S.M."/>
            <person name="Woodage T."/>
            <person name="Worley K.C."/>
            <person name="Wu D."/>
            <person name="Yang S."/>
            <person name="Yao Q.A."/>
            <person name="Ye J."/>
            <person name="Yeh R.-F."/>
            <person name="Zaveri J.S."/>
            <person name="Zhan M."/>
            <person name="Zhang G."/>
            <person name="Zhao Q."/>
            <person name="Zheng L."/>
            <person name="Zheng X.H."/>
            <person name="Zhong F.N."/>
            <person name="Zhong W."/>
            <person name="Zhou X."/>
            <person name="Zhu S.C."/>
            <person name="Zhu X."/>
            <person name="Smith H.O."/>
            <person name="Gibbs R.A."/>
            <person name="Myers E.W."/>
            <person name="Rubin G.M."/>
            <person name="Venter J.C."/>
        </authorList>
    </citation>
    <scope>NUCLEOTIDE SEQUENCE [LARGE SCALE GENOMIC DNA]</scope>
    <source>
        <strain>Berkeley</strain>
    </source>
</reference>
<reference key="3">
    <citation type="journal article" date="2002" name="Genome Biol.">
        <title>Annotation of the Drosophila melanogaster euchromatic genome: a systematic review.</title>
        <authorList>
            <person name="Misra S."/>
            <person name="Crosby M.A."/>
            <person name="Mungall C.J."/>
            <person name="Matthews B.B."/>
            <person name="Campbell K.S."/>
            <person name="Hradecky P."/>
            <person name="Huang Y."/>
            <person name="Kaminker J.S."/>
            <person name="Millburn G.H."/>
            <person name="Prochnik S.E."/>
            <person name="Smith C.D."/>
            <person name="Tupy J.L."/>
            <person name="Whitfield E.J."/>
            <person name="Bayraktaroglu L."/>
            <person name="Berman B.P."/>
            <person name="Bettencourt B.R."/>
            <person name="Celniker S.E."/>
            <person name="de Grey A.D.N.J."/>
            <person name="Drysdale R.A."/>
            <person name="Harris N.L."/>
            <person name="Richter J."/>
            <person name="Russo S."/>
            <person name="Schroeder A.J."/>
            <person name="Shu S.Q."/>
            <person name="Stapleton M."/>
            <person name="Yamada C."/>
            <person name="Ashburner M."/>
            <person name="Gelbart W.M."/>
            <person name="Rubin G.M."/>
            <person name="Lewis S.E."/>
        </authorList>
    </citation>
    <scope>GENOME REANNOTATION</scope>
    <scope>ALTERNATIVE SPLICING</scope>
    <source>
        <strain>Berkeley</strain>
    </source>
</reference>
<reference key="4">
    <citation type="journal article" date="1993" name="Development">
        <title>Puffs and PCR: the in vivo dynamics of early gene expression during ecdysone responses in Drosophila.</title>
        <authorList>
            <person name="Huet F."/>
            <person name="Ruiz C."/>
            <person name="Richards G."/>
        </authorList>
    </citation>
    <scope>DEVELOPMENTAL STAGE</scope>
</reference>
<sequence length="829" mass="87139">MPFIDDALLWCPDNDGRLVGGLDLGTCIADDSTANGTENLNPSIQSAGNPNNPQQSVGGEILGSVESAGNELNGAAARNVNVVVEPLCGGDSSDELFRSFSESNFEIESLLSDLATVEVKVENEENNNNVITDDDFASVAAAVVANDDLLAKENAQLSAQGLVDSVAASLADSGDAGGQQALLAFGSSSSAASAIAAAAAALCGDLINNNNNNSNSNNNSNGNGNHGGGGGGASSGGGVAGDCATKLEYALMGGQPLAEEPRFVTSAAANPLLVEKLMSKCLNIEKRMDKLSDTEIPIVKQSTSPAPQQQLQQQHHLQQQQQQQPHNGSTFAGATALLHIKTEQNTLLTPLQLQQQQQQQQGLHGAAGNGGSSNGNNAHQQQQPLAIPQRPLLHNLLSGGAIHNPHHRNYTTATTGSFPPSPADSGVSDVDSSSSGGQPCADELKARLGMPPATSASAAAAAAAAAAAAAHLHTGTFLHPNLYQNNAANSLRNIWNRSVGVPDNYYGSSGAGSGGTQPGGPGNPQTPGYLTTSYFNAPTAATAAASQRGTTINGYHSLHQQQQQQQQSQQSQQQQQLAHQQLSHQQQQALHQQLSHQQQQQQQQQQQHPHSQLNGPHPHSHPHSHPHSHPHAGQHTHSTIAAAAAAAAASVVSSSSSAVAAAAMLSASAAAAATAAAAAGGSQSVIQPATSSVSYDLSYMLELGGFQQRKAKKPRKPKLEMGVKRRSREGSTTYLWEFLLKLLQDREYCPRFIKWTNREKGVFKLVDSKAVSRLWGMHKNKPDMNYETMGRALRYYYQRGILAKVDGQRLVYQFVDVPKDIIEIDCNGV</sequence>
<gene>
    <name type="primary">Eip74EF</name>
    <name type="synonym">E74</name>
    <name type="ORF">CG32180</name>
</gene>
<evidence type="ECO:0000255" key="1">
    <source>
        <dbReference type="PROSITE-ProRule" id="PRU00237"/>
    </source>
</evidence>
<evidence type="ECO:0000256" key="2">
    <source>
        <dbReference type="SAM" id="MobiDB-lite"/>
    </source>
</evidence>
<evidence type="ECO:0000269" key="3">
    <source>
    </source>
</evidence>
<evidence type="ECO:0000305" key="4"/>
<dbReference type="EMBL" id="M37082">
    <property type="protein sequence ID" value="AAA28493.1"/>
    <property type="molecule type" value="mRNA"/>
</dbReference>
<dbReference type="EMBL" id="AE014296">
    <property type="protein sequence ID" value="AAF49323.2"/>
    <property type="molecule type" value="Genomic_DNA"/>
</dbReference>
<dbReference type="PIR" id="A34692">
    <property type="entry name" value="A34692"/>
</dbReference>
<dbReference type="RefSeq" id="NP_730287.1">
    <molecule id="P20105-1"/>
    <property type="nucleotide sequence ID" value="NM_168740.3"/>
</dbReference>
<dbReference type="SMR" id="P20105"/>
<dbReference type="BioGRID" id="65250">
    <property type="interactions" value="2"/>
</dbReference>
<dbReference type="IntAct" id="P20105">
    <property type="interactions" value="2"/>
</dbReference>
<dbReference type="EnsemblMetazoa" id="FBtr0075202">
    <molecule id="P20105-1"/>
    <property type="protein sequence ID" value="FBpp0074965"/>
    <property type="gene ID" value="FBgn0000567"/>
</dbReference>
<dbReference type="GeneID" id="39962"/>
<dbReference type="AGR" id="FB:FBgn0000567"/>
<dbReference type="CTD" id="39962"/>
<dbReference type="FlyBase" id="FBgn0000567">
    <property type="gene designation" value="Eip74EF"/>
</dbReference>
<dbReference type="VEuPathDB" id="VectorBase:FBgn0000567"/>
<dbReference type="GeneTree" id="ENSGT00940000169052"/>
<dbReference type="OrthoDB" id="8196042at2759"/>
<dbReference type="SignaLink" id="P20105"/>
<dbReference type="BioGRID-ORCS" id="39962">
    <property type="hits" value="0 hits in 3 CRISPR screens"/>
</dbReference>
<dbReference type="ChiTaRS" id="Eip74EF">
    <property type="organism name" value="fly"/>
</dbReference>
<dbReference type="GenomeRNAi" id="39962"/>
<dbReference type="Proteomes" id="UP000000803">
    <property type="component" value="Chromosome 3L"/>
</dbReference>
<dbReference type="Bgee" id="FBgn0000567">
    <property type="expression patterns" value="Expressed in midgut large flat cell (Drosophila) in digestive tract and 247 other cell types or tissues"/>
</dbReference>
<dbReference type="ExpressionAtlas" id="P20105">
    <property type="expression patterns" value="baseline and differential"/>
</dbReference>
<dbReference type="GO" id="GO:0005634">
    <property type="term" value="C:nucleus"/>
    <property type="evidence" value="ECO:0000314"/>
    <property type="project" value="FlyBase"/>
</dbReference>
<dbReference type="GO" id="GO:0001228">
    <property type="term" value="F:DNA-binding transcription activator activity, RNA polymerase II-specific"/>
    <property type="evidence" value="ECO:0000314"/>
    <property type="project" value="FlyBase"/>
</dbReference>
<dbReference type="GO" id="GO:0000981">
    <property type="term" value="F:DNA-binding transcription factor activity, RNA polymerase II-specific"/>
    <property type="evidence" value="ECO:0000318"/>
    <property type="project" value="GO_Central"/>
</dbReference>
<dbReference type="GO" id="GO:0043565">
    <property type="term" value="F:sequence-specific DNA binding"/>
    <property type="evidence" value="ECO:0007669"/>
    <property type="project" value="InterPro"/>
</dbReference>
<dbReference type="GO" id="GO:0048102">
    <property type="term" value="P:autophagic cell death"/>
    <property type="evidence" value="ECO:0000315"/>
    <property type="project" value="FlyBase"/>
</dbReference>
<dbReference type="GO" id="GO:0006914">
    <property type="term" value="P:autophagy"/>
    <property type="evidence" value="ECO:0000315"/>
    <property type="project" value="FlyBase"/>
</dbReference>
<dbReference type="GO" id="GO:0030154">
    <property type="term" value="P:cell differentiation"/>
    <property type="evidence" value="ECO:0000318"/>
    <property type="project" value="GO_Central"/>
</dbReference>
<dbReference type="GO" id="GO:0048477">
    <property type="term" value="P:oogenesis"/>
    <property type="evidence" value="ECO:0000303"/>
    <property type="project" value="FlyBase"/>
</dbReference>
<dbReference type="GO" id="GO:0045944">
    <property type="term" value="P:positive regulation of transcription by RNA polymerase II"/>
    <property type="evidence" value="ECO:0000315"/>
    <property type="project" value="FlyBase"/>
</dbReference>
<dbReference type="GO" id="GO:0040034">
    <property type="term" value="P:regulation of development, heterochronic"/>
    <property type="evidence" value="ECO:0000304"/>
    <property type="project" value="FlyBase"/>
</dbReference>
<dbReference type="GO" id="GO:0006357">
    <property type="term" value="P:regulation of transcription by RNA polymerase II"/>
    <property type="evidence" value="ECO:0000318"/>
    <property type="project" value="GO_Central"/>
</dbReference>
<dbReference type="FunFam" id="1.10.10.10:FF:000411">
    <property type="entry name" value="Ecdysone-induced protein 74EF isoform A"/>
    <property type="match status" value="1"/>
</dbReference>
<dbReference type="Gene3D" id="1.10.10.10">
    <property type="entry name" value="Winged helix-like DNA-binding domain superfamily/Winged helix DNA-binding domain"/>
    <property type="match status" value="1"/>
</dbReference>
<dbReference type="InterPro" id="IPR000418">
    <property type="entry name" value="Ets_dom"/>
</dbReference>
<dbReference type="InterPro" id="IPR046328">
    <property type="entry name" value="ETS_fam"/>
</dbReference>
<dbReference type="InterPro" id="IPR036388">
    <property type="entry name" value="WH-like_DNA-bd_sf"/>
</dbReference>
<dbReference type="InterPro" id="IPR036390">
    <property type="entry name" value="WH_DNA-bd_sf"/>
</dbReference>
<dbReference type="PANTHER" id="PTHR11849:SF191">
    <property type="entry name" value="ECDYSONE-INDUCED PROTEIN 74EF ISOFORM B"/>
    <property type="match status" value="1"/>
</dbReference>
<dbReference type="PANTHER" id="PTHR11849">
    <property type="entry name" value="ETS"/>
    <property type="match status" value="1"/>
</dbReference>
<dbReference type="Pfam" id="PF00178">
    <property type="entry name" value="Ets"/>
    <property type="match status" value="1"/>
</dbReference>
<dbReference type="PRINTS" id="PR00454">
    <property type="entry name" value="ETSDOMAIN"/>
</dbReference>
<dbReference type="SMART" id="SM00413">
    <property type="entry name" value="ETS"/>
    <property type="match status" value="1"/>
</dbReference>
<dbReference type="SUPFAM" id="SSF46785">
    <property type="entry name" value="Winged helix' DNA-binding domain"/>
    <property type="match status" value="1"/>
</dbReference>
<dbReference type="PROSITE" id="PS00345">
    <property type="entry name" value="ETS_DOMAIN_1"/>
    <property type="match status" value="1"/>
</dbReference>
<dbReference type="PROSITE" id="PS00346">
    <property type="entry name" value="ETS_DOMAIN_2"/>
    <property type="match status" value="1"/>
</dbReference>
<dbReference type="PROSITE" id="PS50061">
    <property type="entry name" value="ETS_DOMAIN_3"/>
    <property type="match status" value="1"/>
</dbReference>
<accession>P20105</accession>
<accession>Q9VVI8</accession>
<organism>
    <name type="scientific">Drosophila melanogaster</name>
    <name type="common">Fruit fly</name>
    <dbReference type="NCBI Taxonomy" id="7227"/>
    <lineage>
        <taxon>Eukaryota</taxon>
        <taxon>Metazoa</taxon>
        <taxon>Ecdysozoa</taxon>
        <taxon>Arthropoda</taxon>
        <taxon>Hexapoda</taxon>
        <taxon>Insecta</taxon>
        <taxon>Pterygota</taxon>
        <taxon>Neoptera</taxon>
        <taxon>Endopterygota</taxon>
        <taxon>Diptera</taxon>
        <taxon>Brachycera</taxon>
        <taxon>Muscomorpha</taxon>
        <taxon>Ephydroidea</taxon>
        <taxon>Drosophilidae</taxon>
        <taxon>Drosophila</taxon>
        <taxon>Sophophora</taxon>
    </lineage>
</organism>
<proteinExistence type="evidence at transcript level"/>
<keyword id="KW-0025">Alternative splicing</keyword>
<keyword id="KW-0217">Developmental protein</keyword>
<keyword id="KW-0238">DNA-binding</keyword>
<keyword id="KW-0539">Nucleus</keyword>
<keyword id="KW-1185">Reference proteome</keyword>
<keyword id="KW-0804">Transcription</keyword>
<keyword id="KW-0805">Transcription regulation</keyword>
<protein>
    <recommendedName>
        <fullName>Ecdysone-induced protein 74EF isoform A</fullName>
    </recommendedName>
    <alternativeName>
        <fullName>ETS-related protein E74A</fullName>
    </alternativeName>
</protein>
<name>E74EA_DROME</name>
<feature type="chain" id="PRO_0000204082" description="Ecdysone-induced protein 74EF isoform A">
    <location>
        <begin position="1"/>
        <end position="829"/>
    </location>
</feature>
<feature type="DNA-binding region" description="ETS" evidence="1">
    <location>
        <begin position="733"/>
        <end position="815"/>
    </location>
</feature>
<feature type="region of interest" description="Disordered" evidence="2">
    <location>
        <begin position="214"/>
        <end position="237"/>
    </location>
</feature>
<feature type="region of interest" description="Disordered" evidence="2">
    <location>
        <begin position="301"/>
        <end position="329"/>
    </location>
</feature>
<feature type="region of interest" description="Disordered" evidence="2">
    <location>
        <begin position="353"/>
        <end position="383"/>
    </location>
</feature>
<feature type="region of interest" description="Disordered" evidence="2">
    <location>
        <begin position="396"/>
        <end position="443"/>
    </location>
</feature>
<feature type="region of interest" description="Disordered" evidence="2">
    <location>
        <begin position="508"/>
        <end position="533"/>
    </location>
</feature>
<feature type="region of interest" description="Disordered" evidence="2">
    <location>
        <begin position="558"/>
        <end position="641"/>
    </location>
</feature>
<feature type="compositionally biased region" description="Low complexity" evidence="2">
    <location>
        <begin position="214"/>
        <end position="223"/>
    </location>
</feature>
<feature type="compositionally biased region" description="Gly residues" evidence="2">
    <location>
        <begin position="224"/>
        <end position="237"/>
    </location>
</feature>
<feature type="compositionally biased region" description="Low complexity" evidence="2">
    <location>
        <begin position="308"/>
        <end position="324"/>
    </location>
</feature>
<feature type="compositionally biased region" description="Low complexity" evidence="2">
    <location>
        <begin position="353"/>
        <end position="364"/>
    </location>
</feature>
<feature type="compositionally biased region" description="Low complexity" evidence="2">
    <location>
        <begin position="374"/>
        <end position="383"/>
    </location>
</feature>
<feature type="compositionally biased region" description="Low complexity" evidence="2">
    <location>
        <begin position="423"/>
        <end position="437"/>
    </location>
</feature>
<feature type="compositionally biased region" description="Gly residues" evidence="2">
    <location>
        <begin position="509"/>
        <end position="522"/>
    </location>
</feature>
<feature type="compositionally biased region" description="Low complexity" evidence="2">
    <location>
        <begin position="558"/>
        <end position="617"/>
    </location>
</feature>
<feature type="compositionally biased region" description="Basic residues" evidence="2">
    <location>
        <begin position="618"/>
        <end position="634"/>
    </location>
</feature>
<comment type="subcellular location">
    <subcellularLocation>
        <location>Nucleus</location>
    </subcellularLocation>
</comment>
<comment type="alternative products">
    <event type="alternative splicing"/>
    <isoform>
        <id>P20105-1</id>
        <name>A</name>
        <name>E74A</name>
        <sequence type="displayed"/>
    </isoform>
    <isoform>
        <id>P11536-1</id>
        <name>B</name>
        <name>D</name>
        <name>E74B</name>
        <sequence type="external"/>
    </isoform>
</comment>
<comment type="developmental stage">
    <text evidence="3">In mid instar larvae salivary glands levels are low during puff stage 1 and increase during puff stage 2 to become the predominant form in stage 3. Levels reach maximum in late larvae during puff stages 8-10, decreasing abruptly at stage 11. This expression pattern is also seen in Malpighian tubules and wing disk. Levels at puff stage 11 are appreciable in the gut and fat body. Transcripts are detected again in salivary glands from puff stages 12-14 and 17-21.</text>
</comment>
<comment type="induction">
    <text>The expression of this protein is developmentally regulated and is correlated with the 20-OH-ecdysone induced activity of puff 74EF.</text>
</comment>
<comment type="similarity">
    <text evidence="4">Belongs to the ETS family.</text>
</comment>